<geneLocation type="plasmid">
    <name>large ECE</name>
</geneLocation>
<keyword id="KW-0614">Plasmid</keyword>
<keyword id="KW-1185">Reference proteome</keyword>
<organism>
    <name type="scientific">Methanocaldococcus jannaschii (strain ATCC 43067 / DSM 2661 / JAL-1 / JCM 10045 / NBRC 100440)</name>
    <name type="common">Methanococcus jannaschii</name>
    <dbReference type="NCBI Taxonomy" id="243232"/>
    <lineage>
        <taxon>Archaea</taxon>
        <taxon>Methanobacteriati</taxon>
        <taxon>Methanobacteriota</taxon>
        <taxon>Methanomada group</taxon>
        <taxon>Methanococci</taxon>
        <taxon>Methanococcales</taxon>
        <taxon>Methanocaldococcaceae</taxon>
        <taxon>Methanocaldococcus</taxon>
    </lineage>
</organism>
<accession>Q60284</accession>
<dbReference type="EMBL" id="L77118">
    <property type="protein sequence ID" value="AAC37096.1"/>
    <property type="molecule type" value="Genomic_DNA"/>
</dbReference>
<dbReference type="PIR" id="H64512">
    <property type="entry name" value="H64512"/>
</dbReference>
<dbReference type="RefSeq" id="WP_010890072.1">
    <property type="nucleotide sequence ID" value="NC_001732.1"/>
</dbReference>
<dbReference type="SMR" id="Q60284"/>
<dbReference type="FunCoup" id="Q60284">
    <property type="interactions" value="1"/>
</dbReference>
<dbReference type="PaxDb" id="243232-MJ_ECL25"/>
<dbReference type="EnsemblBacteria" id="AAC37096">
    <property type="protein sequence ID" value="AAC37096"/>
    <property type="gene ID" value="MJ_ECL25"/>
</dbReference>
<dbReference type="GeneID" id="1450809"/>
<dbReference type="KEGG" id="mja:MJ_ECL25"/>
<dbReference type="eggNOG" id="arCOG05095">
    <property type="taxonomic scope" value="Archaea"/>
</dbReference>
<dbReference type="HOGENOM" id="CLU_2165282_0_0_2"/>
<dbReference type="InParanoid" id="Q60284"/>
<dbReference type="PhylomeDB" id="Q60284"/>
<dbReference type="Proteomes" id="UP000000805">
    <property type="component" value="Plasmid pDSM2661_1"/>
</dbReference>
<sequence>MSNDDLNALKKLKEISSGTVKQITSLPKKEPQEEKMSKTLRIKNTTHEKIIEMYGKKVGSQGEVVDKGVAVLYALWKILPEEQFKRVVKLAEEDRFEEFADRLGIEIKEE</sequence>
<feature type="chain" id="PRO_0000107512" description="Uncharacterized protein MJECL25">
    <location>
        <begin position="1"/>
        <end position="110"/>
    </location>
</feature>
<name>Y3525_METJA</name>
<proteinExistence type="predicted"/>
<reference key="1">
    <citation type="journal article" date="1996" name="Science">
        <title>Complete genome sequence of the methanogenic archaeon, Methanococcus jannaschii.</title>
        <authorList>
            <person name="Bult C.J."/>
            <person name="White O."/>
            <person name="Olsen G.J."/>
            <person name="Zhou L."/>
            <person name="Fleischmann R.D."/>
            <person name="Sutton G.G."/>
            <person name="Blake J.A."/>
            <person name="FitzGerald L.M."/>
            <person name="Clayton R.A."/>
            <person name="Gocayne J.D."/>
            <person name="Kerlavage A.R."/>
            <person name="Dougherty B.A."/>
            <person name="Tomb J.-F."/>
            <person name="Adams M.D."/>
            <person name="Reich C.I."/>
            <person name="Overbeek R."/>
            <person name="Kirkness E.F."/>
            <person name="Weinstock K.G."/>
            <person name="Merrick J.M."/>
            <person name="Glodek A."/>
            <person name="Scott J.L."/>
            <person name="Geoghagen N.S.M."/>
            <person name="Weidman J.F."/>
            <person name="Fuhrmann J.L."/>
            <person name="Nguyen D."/>
            <person name="Utterback T.R."/>
            <person name="Kelley J.M."/>
            <person name="Peterson J.D."/>
            <person name="Sadow P.W."/>
            <person name="Hanna M.C."/>
            <person name="Cotton M.D."/>
            <person name="Roberts K.M."/>
            <person name="Hurst M.A."/>
            <person name="Kaine B.P."/>
            <person name="Borodovsky M."/>
            <person name="Klenk H.-P."/>
            <person name="Fraser C.M."/>
            <person name="Smith H.O."/>
            <person name="Woese C.R."/>
            <person name="Venter J.C."/>
        </authorList>
    </citation>
    <scope>NUCLEOTIDE SEQUENCE [LARGE SCALE GENOMIC DNA]</scope>
    <source>
        <strain>ATCC 43067 / DSM 2661 / JAL-1 / JCM 10045 / NBRC 100440</strain>
    </source>
</reference>
<protein>
    <recommendedName>
        <fullName>Uncharacterized protein MJECL25</fullName>
    </recommendedName>
</protein>
<gene>
    <name type="ordered locus">MJECL25</name>
</gene>